<proteinExistence type="inferred from homology"/>
<name>MURB_PASMU</name>
<dbReference type="EC" id="1.3.1.98"/>
<dbReference type="EMBL" id="AE004439">
    <property type="protein sequence ID" value="AAK03673.1"/>
    <property type="molecule type" value="Genomic_DNA"/>
</dbReference>
<dbReference type="RefSeq" id="WP_010907240.1">
    <property type="nucleotide sequence ID" value="NC_002663.1"/>
</dbReference>
<dbReference type="SMR" id="P57952"/>
<dbReference type="STRING" id="272843.PM1589"/>
<dbReference type="EnsemblBacteria" id="AAK03673">
    <property type="protein sequence ID" value="AAK03673"/>
    <property type="gene ID" value="PM1589"/>
</dbReference>
<dbReference type="KEGG" id="pmu:PM1589"/>
<dbReference type="PATRIC" id="fig|272843.6.peg.1608"/>
<dbReference type="HOGENOM" id="CLU_035304_0_0_6"/>
<dbReference type="OrthoDB" id="9804753at2"/>
<dbReference type="UniPathway" id="UPA00219"/>
<dbReference type="Proteomes" id="UP000000809">
    <property type="component" value="Chromosome"/>
</dbReference>
<dbReference type="GO" id="GO:0005829">
    <property type="term" value="C:cytosol"/>
    <property type="evidence" value="ECO:0007669"/>
    <property type="project" value="TreeGrafter"/>
</dbReference>
<dbReference type="GO" id="GO:0071949">
    <property type="term" value="F:FAD binding"/>
    <property type="evidence" value="ECO:0007669"/>
    <property type="project" value="InterPro"/>
</dbReference>
<dbReference type="GO" id="GO:0008762">
    <property type="term" value="F:UDP-N-acetylmuramate dehydrogenase activity"/>
    <property type="evidence" value="ECO:0007669"/>
    <property type="project" value="UniProtKB-UniRule"/>
</dbReference>
<dbReference type="GO" id="GO:0051301">
    <property type="term" value="P:cell division"/>
    <property type="evidence" value="ECO:0007669"/>
    <property type="project" value="UniProtKB-KW"/>
</dbReference>
<dbReference type="GO" id="GO:0071555">
    <property type="term" value="P:cell wall organization"/>
    <property type="evidence" value="ECO:0007669"/>
    <property type="project" value="UniProtKB-KW"/>
</dbReference>
<dbReference type="GO" id="GO:0009252">
    <property type="term" value="P:peptidoglycan biosynthetic process"/>
    <property type="evidence" value="ECO:0007669"/>
    <property type="project" value="UniProtKB-UniRule"/>
</dbReference>
<dbReference type="GO" id="GO:0008360">
    <property type="term" value="P:regulation of cell shape"/>
    <property type="evidence" value="ECO:0007669"/>
    <property type="project" value="UniProtKB-KW"/>
</dbReference>
<dbReference type="Gene3D" id="3.30.465.10">
    <property type="match status" value="1"/>
</dbReference>
<dbReference type="Gene3D" id="3.90.78.10">
    <property type="entry name" value="UDP-N-acetylenolpyruvoylglucosamine reductase, C-terminal domain"/>
    <property type="match status" value="1"/>
</dbReference>
<dbReference type="Gene3D" id="3.30.43.10">
    <property type="entry name" value="Uridine Diphospho-n-acetylenolpyruvylglucosamine Reductase, domain 2"/>
    <property type="match status" value="1"/>
</dbReference>
<dbReference type="HAMAP" id="MF_00037">
    <property type="entry name" value="MurB"/>
    <property type="match status" value="1"/>
</dbReference>
<dbReference type="InterPro" id="IPR016166">
    <property type="entry name" value="FAD-bd_PCMH"/>
</dbReference>
<dbReference type="InterPro" id="IPR036318">
    <property type="entry name" value="FAD-bd_PCMH-like_sf"/>
</dbReference>
<dbReference type="InterPro" id="IPR016167">
    <property type="entry name" value="FAD-bd_PCMH_sub1"/>
</dbReference>
<dbReference type="InterPro" id="IPR016169">
    <property type="entry name" value="FAD-bd_PCMH_sub2"/>
</dbReference>
<dbReference type="InterPro" id="IPR003170">
    <property type="entry name" value="MurB"/>
</dbReference>
<dbReference type="InterPro" id="IPR011601">
    <property type="entry name" value="MurB_C"/>
</dbReference>
<dbReference type="InterPro" id="IPR036635">
    <property type="entry name" value="MurB_C_sf"/>
</dbReference>
<dbReference type="InterPro" id="IPR006094">
    <property type="entry name" value="Oxid_FAD_bind_N"/>
</dbReference>
<dbReference type="NCBIfam" id="TIGR00179">
    <property type="entry name" value="murB"/>
    <property type="match status" value="1"/>
</dbReference>
<dbReference type="NCBIfam" id="NF000755">
    <property type="entry name" value="PRK00046.1"/>
    <property type="match status" value="1"/>
</dbReference>
<dbReference type="NCBIfam" id="NF010478">
    <property type="entry name" value="PRK13903.1"/>
    <property type="match status" value="1"/>
</dbReference>
<dbReference type="PANTHER" id="PTHR21071">
    <property type="entry name" value="UDP-N-ACETYLENOLPYRUVOYLGLUCOSAMINE REDUCTASE"/>
    <property type="match status" value="1"/>
</dbReference>
<dbReference type="PANTHER" id="PTHR21071:SF4">
    <property type="entry name" value="UDP-N-ACETYLENOLPYRUVOYLGLUCOSAMINE REDUCTASE"/>
    <property type="match status" value="1"/>
</dbReference>
<dbReference type="Pfam" id="PF01565">
    <property type="entry name" value="FAD_binding_4"/>
    <property type="match status" value="1"/>
</dbReference>
<dbReference type="Pfam" id="PF02873">
    <property type="entry name" value="MurB_C"/>
    <property type="match status" value="1"/>
</dbReference>
<dbReference type="SUPFAM" id="SSF56176">
    <property type="entry name" value="FAD-binding/transporter-associated domain-like"/>
    <property type="match status" value="1"/>
</dbReference>
<dbReference type="SUPFAM" id="SSF56194">
    <property type="entry name" value="Uridine diphospho-N-Acetylenolpyruvylglucosamine reductase, MurB, C-terminal domain"/>
    <property type="match status" value="1"/>
</dbReference>
<dbReference type="PROSITE" id="PS51387">
    <property type="entry name" value="FAD_PCMH"/>
    <property type="match status" value="1"/>
</dbReference>
<keyword id="KW-0131">Cell cycle</keyword>
<keyword id="KW-0132">Cell division</keyword>
<keyword id="KW-0133">Cell shape</keyword>
<keyword id="KW-0961">Cell wall biogenesis/degradation</keyword>
<keyword id="KW-0963">Cytoplasm</keyword>
<keyword id="KW-0274">FAD</keyword>
<keyword id="KW-0285">Flavoprotein</keyword>
<keyword id="KW-0521">NADP</keyword>
<keyword id="KW-0560">Oxidoreductase</keyword>
<keyword id="KW-0573">Peptidoglycan synthesis</keyword>
<keyword id="KW-1185">Reference proteome</keyword>
<comment type="function">
    <text evidence="1">Cell wall formation.</text>
</comment>
<comment type="catalytic activity">
    <reaction>
        <text>UDP-N-acetyl-alpha-D-muramate + NADP(+) = UDP-N-acetyl-3-O-(1-carboxyvinyl)-alpha-D-glucosamine + NADPH + H(+)</text>
        <dbReference type="Rhea" id="RHEA:12248"/>
        <dbReference type="ChEBI" id="CHEBI:15378"/>
        <dbReference type="ChEBI" id="CHEBI:57783"/>
        <dbReference type="ChEBI" id="CHEBI:58349"/>
        <dbReference type="ChEBI" id="CHEBI:68483"/>
        <dbReference type="ChEBI" id="CHEBI:70757"/>
        <dbReference type="EC" id="1.3.1.98"/>
    </reaction>
</comment>
<comment type="cofactor">
    <cofactor evidence="1">
        <name>FAD</name>
        <dbReference type="ChEBI" id="CHEBI:57692"/>
    </cofactor>
</comment>
<comment type="pathway">
    <text>Cell wall biogenesis; peptidoglycan biosynthesis.</text>
</comment>
<comment type="subcellular location">
    <subcellularLocation>
        <location evidence="1">Cytoplasm</location>
    </subcellularLocation>
</comment>
<comment type="similarity">
    <text evidence="2">Belongs to the MurB family.</text>
</comment>
<protein>
    <recommendedName>
        <fullName>UDP-N-acetylenolpyruvoylglucosamine reductase</fullName>
        <ecNumber>1.3.1.98</ecNumber>
    </recommendedName>
    <alternativeName>
        <fullName>UDP-N-acetylmuramate dehydrogenase</fullName>
    </alternativeName>
</protein>
<feature type="chain" id="PRO_0000179236" description="UDP-N-acetylenolpyruvoylglucosamine reductase">
    <location>
        <begin position="1"/>
        <end position="341"/>
    </location>
</feature>
<feature type="domain" description="FAD-binding PCMH-type">
    <location>
        <begin position="12"/>
        <end position="182"/>
    </location>
</feature>
<feature type="active site" evidence="1">
    <location>
        <position position="158"/>
    </location>
</feature>
<feature type="active site" description="Proton donor" evidence="1">
    <location>
        <position position="228"/>
    </location>
</feature>
<feature type="active site" evidence="1">
    <location>
        <position position="324"/>
    </location>
</feature>
<accession>P57952</accession>
<sequence>MQNLQPFHTFSLPVQAQKIIEITDIEQLKQQWAACQTNKLPVLLLGQGSNVLFLRDFQGVVLLNRLMGIQHTQDADFHYLHVNGGENWHQLVAWSIQQGIFGLENLALIPGCAGSAPIQNIGAYGVEFKDVCDYVEVLNLHTNEIFRLSNEQCQFGYRDSIFKHAYATGYVIIAVGLKLSKNWIPVLKYGSLANLEKSAVNAQQIFDEVCAIRRSKLPDPAEFGNAGSFFKNPVISKVDFDHLQQEYPDIPHFPQADGRVKLAAGWLIDQCGLKGYQLGGAAVHQQQALVLINQQDATSSDVVELAHHIRQKVAQRFAVWLQPEVRFIDEDGEVDSEQAIC</sequence>
<gene>
    <name type="primary">murB</name>
    <name type="ordered locus">PM1589</name>
</gene>
<organism>
    <name type="scientific">Pasteurella multocida (strain Pm70)</name>
    <dbReference type="NCBI Taxonomy" id="272843"/>
    <lineage>
        <taxon>Bacteria</taxon>
        <taxon>Pseudomonadati</taxon>
        <taxon>Pseudomonadota</taxon>
        <taxon>Gammaproteobacteria</taxon>
        <taxon>Pasteurellales</taxon>
        <taxon>Pasteurellaceae</taxon>
        <taxon>Pasteurella</taxon>
    </lineage>
</organism>
<evidence type="ECO:0000250" key="1"/>
<evidence type="ECO:0000305" key="2"/>
<reference key="1">
    <citation type="journal article" date="2001" name="Proc. Natl. Acad. Sci. U.S.A.">
        <title>Complete genomic sequence of Pasteurella multocida Pm70.</title>
        <authorList>
            <person name="May B.J."/>
            <person name="Zhang Q."/>
            <person name="Li L.L."/>
            <person name="Paustian M.L."/>
            <person name="Whittam T.S."/>
            <person name="Kapur V."/>
        </authorList>
    </citation>
    <scope>NUCLEOTIDE SEQUENCE [LARGE SCALE GENOMIC DNA]</scope>
    <source>
        <strain>Pm70</strain>
    </source>
</reference>